<accession>O08674</accession>
<dbReference type="EMBL" id="Y10926">
    <property type="protein sequence ID" value="CAA71856.1"/>
    <property type="molecule type" value="mRNA"/>
</dbReference>
<dbReference type="CCDS" id="CCDS17035.1"/>
<dbReference type="RefSeq" id="NP_033062.1">
    <property type="nucleotide sequence ID" value="NM_009036.1"/>
</dbReference>
<dbReference type="SMR" id="O08674"/>
<dbReference type="BioGRID" id="202836">
    <property type="interactions" value="13"/>
</dbReference>
<dbReference type="FunCoup" id="O08674">
    <property type="interactions" value="119"/>
</dbReference>
<dbReference type="IntAct" id="O08674">
    <property type="interactions" value="1"/>
</dbReference>
<dbReference type="STRING" id="10090.ENSMUSP00000017151"/>
<dbReference type="PhosphoSitePlus" id="O08674"/>
<dbReference type="PaxDb" id="10090-ENSMUSP00000017151"/>
<dbReference type="PeptideAtlas" id="O08674"/>
<dbReference type="ProteomicsDB" id="255050"/>
<dbReference type="Antibodypedia" id="3481">
    <property type="antibodies" value="158 antibodies from 25 providers"/>
</dbReference>
<dbReference type="DNASU" id="19668"/>
<dbReference type="Ensembl" id="ENSMUST00000017151.2">
    <property type="protein sequence ID" value="ENSMUSP00000017151.2"/>
    <property type="gene ID" value="ENSMUSG00000017007.10"/>
</dbReference>
<dbReference type="GeneID" id="19668"/>
<dbReference type="KEGG" id="mmu:19668"/>
<dbReference type="UCSC" id="uc008nup.1">
    <property type="organism name" value="mouse"/>
</dbReference>
<dbReference type="AGR" id="MGI:1196616"/>
<dbReference type="CTD" id="11317"/>
<dbReference type="MGI" id="MGI:1196616">
    <property type="gene designation" value="Rbpjl"/>
</dbReference>
<dbReference type="VEuPathDB" id="HostDB:ENSMUSG00000017007"/>
<dbReference type="eggNOG" id="KOG3743">
    <property type="taxonomic scope" value="Eukaryota"/>
</dbReference>
<dbReference type="GeneTree" id="ENSGT00390000005197"/>
<dbReference type="HOGENOM" id="CLU_022207_2_0_1"/>
<dbReference type="InParanoid" id="O08674"/>
<dbReference type="OMA" id="VQGEHFH"/>
<dbReference type="OrthoDB" id="5600360at2759"/>
<dbReference type="PhylomeDB" id="O08674"/>
<dbReference type="TreeFam" id="TF314117"/>
<dbReference type="BioGRID-ORCS" id="19668">
    <property type="hits" value="3 hits in 77 CRISPR screens"/>
</dbReference>
<dbReference type="PRO" id="PR:O08674"/>
<dbReference type="Proteomes" id="UP000000589">
    <property type="component" value="Chromosome 2"/>
</dbReference>
<dbReference type="RNAct" id="O08674">
    <property type="molecule type" value="protein"/>
</dbReference>
<dbReference type="Bgee" id="ENSMUSG00000017007">
    <property type="expression patterns" value="Expressed in metanephros induced blastemal cells and 36 other cell types or tissues"/>
</dbReference>
<dbReference type="ExpressionAtlas" id="O08674">
    <property type="expression patterns" value="baseline and differential"/>
</dbReference>
<dbReference type="GO" id="GO:0005634">
    <property type="term" value="C:nucleus"/>
    <property type="evidence" value="ECO:0000314"/>
    <property type="project" value="MGI"/>
</dbReference>
<dbReference type="GO" id="GO:0005667">
    <property type="term" value="C:transcription regulator complex"/>
    <property type="evidence" value="ECO:0000314"/>
    <property type="project" value="MGI"/>
</dbReference>
<dbReference type="GO" id="GO:0003682">
    <property type="term" value="F:chromatin binding"/>
    <property type="evidence" value="ECO:0000314"/>
    <property type="project" value="MGI"/>
</dbReference>
<dbReference type="GO" id="GO:0003677">
    <property type="term" value="F:DNA binding"/>
    <property type="evidence" value="ECO:0000314"/>
    <property type="project" value="MGI"/>
</dbReference>
<dbReference type="GO" id="GO:0001228">
    <property type="term" value="F:DNA-binding transcription activator activity, RNA polymerase II-specific"/>
    <property type="evidence" value="ECO:0000314"/>
    <property type="project" value="NTNU_SB"/>
</dbReference>
<dbReference type="GO" id="GO:0000978">
    <property type="term" value="F:RNA polymerase II cis-regulatory region sequence-specific DNA binding"/>
    <property type="evidence" value="ECO:0007669"/>
    <property type="project" value="InterPro"/>
</dbReference>
<dbReference type="GO" id="GO:0000977">
    <property type="term" value="F:RNA polymerase II transcription regulatory region sequence-specific DNA binding"/>
    <property type="evidence" value="ECO:0000314"/>
    <property type="project" value="NTNU_SB"/>
</dbReference>
<dbReference type="GO" id="GO:0045893">
    <property type="term" value="P:positive regulation of DNA-templated transcription"/>
    <property type="evidence" value="ECO:0000314"/>
    <property type="project" value="MGI"/>
</dbReference>
<dbReference type="GO" id="GO:0045944">
    <property type="term" value="P:positive regulation of transcription by RNA polymerase II"/>
    <property type="evidence" value="ECO:0000314"/>
    <property type="project" value="NTNU_SB"/>
</dbReference>
<dbReference type="CDD" id="cd01176">
    <property type="entry name" value="IPT_RBP-Jkappa"/>
    <property type="match status" value="1"/>
</dbReference>
<dbReference type="FunFam" id="2.60.40.1450:FF:000002">
    <property type="entry name" value="Recombination signal binding protein for immunoglobulin kappa J region like"/>
    <property type="match status" value="1"/>
</dbReference>
<dbReference type="FunFam" id="2.80.10.50:FF:000003">
    <property type="entry name" value="recombining binding protein suppressor of hairless"/>
    <property type="match status" value="1"/>
</dbReference>
<dbReference type="FunFam" id="2.60.40.10:FF:000074">
    <property type="entry name" value="Recombining binding protein suppressor of hairless, putative"/>
    <property type="match status" value="1"/>
</dbReference>
<dbReference type="Gene3D" id="2.80.10.50">
    <property type="match status" value="1"/>
</dbReference>
<dbReference type="Gene3D" id="2.60.40.10">
    <property type="entry name" value="Immunoglobulins"/>
    <property type="match status" value="1"/>
</dbReference>
<dbReference type="Gene3D" id="2.60.40.1450">
    <property type="entry name" value="LAG1, DNA binding domain"/>
    <property type="match status" value="1"/>
</dbReference>
<dbReference type="InterPro" id="IPR015350">
    <property type="entry name" value="Beta-trefoil_DNA-bd_dom"/>
</dbReference>
<dbReference type="InterPro" id="IPR036358">
    <property type="entry name" value="BTD_sf"/>
</dbReference>
<dbReference type="InterPro" id="IPR040159">
    <property type="entry name" value="CLS_fam"/>
</dbReference>
<dbReference type="InterPro" id="IPR013783">
    <property type="entry name" value="Ig-like_fold"/>
</dbReference>
<dbReference type="InterPro" id="IPR014756">
    <property type="entry name" value="Ig_E-set"/>
</dbReference>
<dbReference type="InterPro" id="IPR008967">
    <property type="entry name" value="p53-like_TF_DNA-bd_sf"/>
</dbReference>
<dbReference type="InterPro" id="IPR015351">
    <property type="entry name" value="RBP-J/Cbf11/Cbf12_DNA-bd"/>
</dbReference>
<dbReference type="InterPro" id="IPR037095">
    <property type="entry name" value="RBP-J/Cbf11_DNA-bd_sf"/>
</dbReference>
<dbReference type="InterPro" id="IPR038007">
    <property type="entry name" value="RBP-Jkappa_IPT"/>
</dbReference>
<dbReference type="PANTHER" id="PTHR10665">
    <property type="entry name" value="RECOMBINING BINDING PROTEIN SUPPRESSOR OF HAIRLESS"/>
    <property type="match status" value="1"/>
</dbReference>
<dbReference type="Pfam" id="PF09270">
    <property type="entry name" value="BTD"/>
    <property type="match status" value="1"/>
</dbReference>
<dbReference type="Pfam" id="PF09271">
    <property type="entry name" value="LAG1-DNAbind"/>
    <property type="match status" value="1"/>
</dbReference>
<dbReference type="Pfam" id="PF20144">
    <property type="entry name" value="TIG_SUH"/>
    <property type="match status" value="1"/>
</dbReference>
<dbReference type="SMART" id="SM01268">
    <property type="entry name" value="BTD"/>
    <property type="match status" value="1"/>
</dbReference>
<dbReference type="SMART" id="SM01267">
    <property type="entry name" value="LAG1_DNAbind"/>
    <property type="match status" value="1"/>
</dbReference>
<dbReference type="SUPFAM" id="SSF110217">
    <property type="entry name" value="DNA-binding protein LAG-1 (CSL)"/>
    <property type="match status" value="1"/>
</dbReference>
<dbReference type="SUPFAM" id="SSF81296">
    <property type="entry name" value="E set domains"/>
    <property type="match status" value="1"/>
</dbReference>
<dbReference type="SUPFAM" id="SSF49417">
    <property type="entry name" value="p53-like transcription factors"/>
    <property type="match status" value="1"/>
</dbReference>
<gene>
    <name type="primary">Rbpjl</name>
    <name type="synonym">Rbpl</name>
    <name type="synonym">Rbpsuhl</name>
</gene>
<reference key="1">
    <citation type="journal article" date="1997" name="Mol. Cell. Biol.">
        <title>RBP-L, a transcription factor related to RBP-Jkappa.</title>
        <authorList>
            <person name="Minoguchi S."/>
            <person name="Taniguchi Y."/>
            <person name="Kato H."/>
            <person name="Okazaki T."/>
            <person name="Strobl L.J."/>
            <person name="Zimber-Strobl U."/>
            <person name="Bornkamm G.W."/>
            <person name="Honjo T."/>
        </authorList>
    </citation>
    <scope>NUCLEOTIDE SEQUENCE [MRNA]</scope>
    <scope>SUBCELLULAR LOCATION</scope>
    <scope>TISSUE SPECIFICITY</scope>
    <scope>INTERACTION WITH EBNA2</scope>
    <source>
        <strain>C57BL/6J</strain>
        <tissue>Lung</tissue>
    </source>
</reference>
<feature type="chain" id="PRO_0000208571" description="Recombining binding protein suppressor of hairless-like protein">
    <location>
        <begin position="1"/>
        <end position="515"/>
    </location>
</feature>
<feature type="domain" description="IPT/TIG">
    <location>
        <begin position="384"/>
        <end position="474"/>
    </location>
</feature>
<feature type="region of interest" description="Disordered" evidence="2">
    <location>
        <begin position="1"/>
        <end position="40"/>
    </location>
</feature>
<feature type="region of interest" description="DNA-binding" evidence="1">
    <location>
        <begin position="76"/>
        <end position="86"/>
    </location>
</feature>
<feature type="region of interest" description="DNA-binding" evidence="1">
    <location>
        <begin position="191"/>
        <end position="196"/>
    </location>
</feature>
<feature type="region of interest" description="DNA-binding" evidence="1">
    <location>
        <begin position="218"/>
        <end position="223"/>
    </location>
</feature>
<name>RBPJL_MOUSE</name>
<organism>
    <name type="scientific">Mus musculus</name>
    <name type="common">Mouse</name>
    <dbReference type="NCBI Taxonomy" id="10090"/>
    <lineage>
        <taxon>Eukaryota</taxon>
        <taxon>Metazoa</taxon>
        <taxon>Chordata</taxon>
        <taxon>Craniata</taxon>
        <taxon>Vertebrata</taxon>
        <taxon>Euteleostomi</taxon>
        <taxon>Mammalia</taxon>
        <taxon>Eutheria</taxon>
        <taxon>Euarchontoglires</taxon>
        <taxon>Glires</taxon>
        <taxon>Rodentia</taxon>
        <taxon>Myomorpha</taxon>
        <taxon>Muroidea</taxon>
        <taxon>Muridae</taxon>
        <taxon>Murinae</taxon>
        <taxon>Mus</taxon>
        <taxon>Mus</taxon>
    </lineage>
</organism>
<evidence type="ECO:0000250" key="1">
    <source>
        <dbReference type="UniProtKB" id="Q06330"/>
    </source>
</evidence>
<evidence type="ECO:0000256" key="2">
    <source>
        <dbReference type="SAM" id="MobiDB-lite"/>
    </source>
</evidence>
<evidence type="ECO:0000269" key="3">
    <source>
    </source>
</evidence>
<evidence type="ECO:0000305" key="4"/>
<sequence length="515" mass="56780">MDPRETTDPSLPPGPLTHLSLPDSSEVRLQSDGPSLLGSWTRSPPEHAIILREGVRTCLQQRCEQTVWILHAKVAQKSYGNEKRFFCPPPCVYLAGPGWRVKPMQDQALQSAETGPTVCGYMGLDGASGSAPETQKLNFEEQPDSREFGCAKTLYISDADKRKHFRLVLRLVLRGGQELGTFHSRLIKVISKPSQKKQSLKNTDLCISSGSKVSLFNRLRSQTVSTRYLSVEDGAFVASARQWAAFTLHLADGHCSQGDFPPQEGYIRYGSLVQLVCTVTGITLPPMIIRKVAKQCALLDVDEPISQLHKCAFQFPSDTPGGAGTYLCLATEKVVRFQASLCPKEANRALLNDSSCWTIIGTESVEFTFSTSLACTREPVTPVPLISTLELSGGGDVATLELHGENFHAGLKVWFGDVEAETMYRSPRSLVCVVPDVAAFGSDWRWLRTPITVPVSLLRADALFYPSPFSFTYTPEYSALPRLPNAQEPAPDADTLLESIHHEFTRTNFHLFCPT</sequence>
<protein>
    <recommendedName>
        <fullName>Recombining binding protein suppressor of hairless-like protein</fullName>
    </recommendedName>
    <alternativeName>
        <fullName>Transcription factor RBP-L</fullName>
    </alternativeName>
</protein>
<keyword id="KW-0010">Activator</keyword>
<keyword id="KW-0238">DNA-binding</keyword>
<keyword id="KW-0539">Nucleus</keyword>
<keyword id="KW-1185">Reference proteome</keyword>
<keyword id="KW-0804">Transcription</keyword>
<keyword id="KW-0805">Transcription regulation</keyword>
<proteinExistence type="evidence at protein level"/>
<comment type="function">
    <text>Putative transcription factor, which cooperates with EBNA2 to activate transcription.</text>
</comment>
<comment type="subunit">
    <text evidence="3">Interacts weakly with EBNA2. Does not interact with any Notch proteins.</text>
</comment>
<comment type="subcellular location">
    <subcellularLocation>
        <location evidence="3">Nucleus</location>
    </subcellularLocation>
</comment>
<comment type="tissue specificity">
    <text evidence="3">Highly expressed in lung. Also detected in spleen, and brain.</text>
</comment>
<comment type="similarity">
    <text evidence="4">Belongs to the Su(H) family.</text>
</comment>